<dbReference type="EMBL" id="CP000248">
    <property type="protein sequence ID" value="ABD25707.1"/>
    <property type="molecule type" value="Genomic_DNA"/>
</dbReference>
<dbReference type="RefSeq" id="WP_011444921.1">
    <property type="nucleotide sequence ID" value="NC_007794.1"/>
</dbReference>
<dbReference type="SMR" id="Q2G8W6"/>
<dbReference type="STRING" id="279238.Saro_1263"/>
<dbReference type="KEGG" id="nar:Saro_1263"/>
<dbReference type="eggNOG" id="COG0096">
    <property type="taxonomic scope" value="Bacteria"/>
</dbReference>
<dbReference type="HOGENOM" id="CLU_098428_0_0_5"/>
<dbReference type="Proteomes" id="UP000009134">
    <property type="component" value="Chromosome"/>
</dbReference>
<dbReference type="GO" id="GO:1990904">
    <property type="term" value="C:ribonucleoprotein complex"/>
    <property type="evidence" value="ECO:0007669"/>
    <property type="project" value="UniProtKB-KW"/>
</dbReference>
<dbReference type="GO" id="GO:0005840">
    <property type="term" value="C:ribosome"/>
    <property type="evidence" value="ECO:0007669"/>
    <property type="project" value="UniProtKB-KW"/>
</dbReference>
<dbReference type="GO" id="GO:0019843">
    <property type="term" value="F:rRNA binding"/>
    <property type="evidence" value="ECO:0007669"/>
    <property type="project" value="UniProtKB-UniRule"/>
</dbReference>
<dbReference type="GO" id="GO:0003735">
    <property type="term" value="F:structural constituent of ribosome"/>
    <property type="evidence" value="ECO:0007669"/>
    <property type="project" value="InterPro"/>
</dbReference>
<dbReference type="GO" id="GO:0006412">
    <property type="term" value="P:translation"/>
    <property type="evidence" value="ECO:0007669"/>
    <property type="project" value="UniProtKB-UniRule"/>
</dbReference>
<dbReference type="FunFam" id="3.30.1370.30:FF:000002">
    <property type="entry name" value="30S ribosomal protein S8"/>
    <property type="match status" value="1"/>
</dbReference>
<dbReference type="FunFam" id="3.30.1490.10:FF:000001">
    <property type="entry name" value="30S ribosomal protein S8"/>
    <property type="match status" value="1"/>
</dbReference>
<dbReference type="Gene3D" id="3.30.1370.30">
    <property type="match status" value="1"/>
</dbReference>
<dbReference type="Gene3D" id="3.30.1490.10">
    <property type="match status" value="1"/>
</dbReference>
<dbReference type="HAMAP" id="MF_01302_B">
    <property type="entry name" value="Ribosomal_uS8_B"/>
    <property type="match status" value="1"/>
</dbReference>
<dbReference type="InterPro" id="IPR000630">
    <property type="entry name" value="Ribosomal_uS8"/>
</dbReference>
<dbReference type="InterPro" id="IPR047863">
    <property type="entry name" value="Ribosomal_uS8_CS"/>
</dbReference>
<dbReference type="InterPro" id="IPR035987">
    <property type="entry name" value="Ribosomal_uS8_sf"/>
</dbReference>
<dbReference type="NCBIfam" id="NF001109">
    <property type="entry name" value="PRK00136.1"/>
    <property type="match status" value="1"/>
</dbReference>
<dbReference type="PANTHER" id="PTHR11758">
    <property type="entry name" value="40S RIBOSOMAL PROTEIN S15A"/>
    <property type="match status" value="1"/>
</dbReference>
<dbReference type="Pfam" id="PF00410">
    <property type="entry name" value="Ribosomal_S8"/>
    <property type="match status" value="1"/>
</dbReference>
<dbReference type="SUPFAM" id="SSF56047">
    <property type="entry name" value="Ribosomal protein S8"/>
    <property type="match status" value="1"/>
</dbReference>
<dbReference type="PROSITE" id="PS00053">
    <property type="entry name" value="RIBOSOMAL_S8"/>
    <property type="match status" value="1"/>
</dbReference>
<comment type="function">
    <text evidence="1">One of the primary rRNA binding proteins, it binds directly to 16S rRNA central domain where it helps coordinate assembly of the platform of the 30S subunit.</text>
</comment>
<comment type="subunit">
    <text evidence="1">Part of the 30S ribosomal subunit. Contacts proteins S5 and S12.</text>
</comment>
<comment type="similarity">
    <text evidence="1">Belongs to the universal ribosomal protein uS8 family.</text>
</comment>
<protein>
    <recommendedName>
        <fullName evidence="1">Small ribosomal subunit protein uS8</fullName>
    </recommendedName>
    <alternativeName>
        <fullName evidence="2">30S ribosomal protein S8</fullName>
    </alternativeName>
</protein>
<evidence type="ECO:0000255" key="1">
    <source>
        <dbReference type="HAMAP-Rule" id="MF_01302"/>
    </source>
</evidence>
<evidence type="ECO:0000305" key="2"/>
<proteinExistence type="inferred from homology"/>
<organism>
    <name type="scientific">Novosphingobium aromaticivorans (strain ATCC 700278 / DSM 12444 / CCUG 56034 / CIP 105152 / NBRC 16084 / F199)</name>
    <dbReference type="NCBI Taxonomy" id="279238"/>
    <lineage>
        <taxon>Bacteria</taxon>
        <taxon>Pseudomonadati</taxon>
        <taxon>Pseudomonadota</taxon>
        <taxon>Alphaproteobacteria</taxon>
        <taxon>Sphingomonadales</taxon>
        <taxon>Sphingomonadaceae</taxon>
        <taxon>Novosphingobium</taxon>
    </lineage>
</organism>
<reference key="1">
    <citation type="submission" date="2006-01" db="EMBL/GenBank/DDBJ databases">
        <title>Complete sequence of Novosphingobium aromaticivorans DSM 12444.</title>
        <authorList>
            <consortium name="US DOE Joint Genome Institute"/>
            <person name="Copeland A."/>
            <person name="Lucas S."/>
            <person name="Lapidus A."/>
            <person name="Barry K."/>
            <person name="Detter J.C."/>
            <person name="Glavina T."/>
            <person name="Hammon N."/>
            <person name="Israni S."/>
            <person name="Pitluck S."/>
            <person name="Chain P."/>
            <person name="Malfatti S."/>
            <person name="Shin M."/>
            <person name="Vergez L."/>
            <person name="Schmutz J."/>
            <person name="Larimer F."/>
            <person name="Land M."/>
            <person name="Kyrpides N."/>
            <person name="Ivanova N."/>
            <person name="Fredrickson J."/>
            <person name="Balkwill D."/>
            <person name="Romine M.F."/>
            <person name="Richardson P."/>
        </authorList>
    </citation>
    <scope>NUCLEOTIDE SEQUENCE [LARGE SCALE GENOMIC DNA]</scope>
    <source>
        <strain>ATCC 700278 / DSM 12444 / CCUG 56034 / CIP 105152 / NBRC 16084 / F199</strain>
    </source>
</reference>
<feature type="chain" id="PRO_0000290891" description="Small ribosomal subunit protein uS8">
    <location>
        <begin position="1"/>
        <end position="131"/>
    </location>
</feature>
<sequence>MAMTDPLGDMLTRIRNGQQAKKDSVLSPASKLRAHVLEVLQREGYIRGFSEDTTGVHPQLRIELKYFEGQPAIKHVARVSKPGRRVYSGSKELPVIRNGLGITIVSTPKGVLSDAEARAANVGGEVLAEVF</sequence>
<name>RS8_NOVAD</name>
<gene>
    <name evidence="1" type="primary">rpsH</name>
    <name type="ordered locus">Saro_1263</name>
</gene>
<accession>Q2G8W6</accession>
<keyword id="KW-1185">Reference proteome</keyword>
<keyword id="KW-0687">Ribonucleoprotein</keyword>
<keyword id="KW-0689">Ribosomal protein</keyword>
<keyword id="KW-0694">RNA-binding</keyword>
<keyword id="KW-0699">rRNA-binding</keyword>